<dbReference type="EC" id="1.1.1.23" evidence="1"/>
<dbReference type="EMBL" id="AE016823">
    <property type="protein sequence ID" value="AAS70051.1"/>
    <property type="molecule type" value="Genomic_DNA"/>
</dbReference>
<dbReference type="RefSeq" id="WP_001007462.1">
    <property type="nucleotide sequence ID" value="NC_005823.1"/>
</dbReference>
<dbReference type="SMR" id="P62458"/>
<dbReference type="GeneID" id="61144754"/>
<dbReference type="KEGG" id="lic:LIC_11453"/>
<dbReference type="HOGENOM" id="CLU_006732_3_0_12"/>
<dbReference type="UniPathway" id="UPA00031">
    <property type="reaction ID" value="UER00014"/>
</dbReference>
<dbReference type="Proteomes" id="UP000007037">
    <property type="component" value="Chromosome I"/>
</dbReference>
<dbReference type="GO" id="GO:0005829">
    <property type="term" value="C:cytosol"/>
    <property type="evidence" value="ECO:0007669"/>
    <property type="project" value="TreeGrafter"/>
</dbReference>
<dbReference type="GO" id="GO:0004399">
    <property type="term" value="F:histidinol dehydrogenase activity"/>
    <property type="evidence" value="ECO:0007669"/>
    <property type="project" value="UniProtKB-UniRule"/>
</dbReference>
<dbReference type="GO" id="GO:0051287">
    <property type="term" value="F:NAD binding"/>
    <property type="evidence" value="ECO:0007669"/>
    <property type="project" value="InterPro"/>
</dbReference>
<dbReference type="GO" id="GO:0008270">
    <property type="term" value="F:zinc ion binding"/>
    <property type="evidence" value="ECO:0007669"/>
    <property type="project" value="UniProtKB-UniRule"/>
</dbReference>
<dbReference type="GO" id="GO:0000105">
    <property type="term" value="P:L-histidine biosynthetic process"/>
    <property type="evidence" value="ECO:0007669"/>
    <property type="project" value="UniProtKB-UniRule"/>
</dbReference>
<dbReference type="CDD" id="cd06572">
    <property type="entry name" value="Histidinol_dh"/>
    <property type="match status" value="1"/>
</dbReference>
<dbReference type="FunFam" id="3.40.50.1980:FF:000001">
    <property type="entry name" value="Histidinol dehydrogenase"/>
    <property type="match status" value="1"/>
</dbReference>
<dbReference type="Gene3D" id="1.20.5.1300">
    <property type="match status" value="1"/>
</dbReference>
<dbReference type="Gene3D" id="3.40.50.1980">
    <property type="entry name" value="Nitrogenase molybdenum iron protein domain"/>
    <property type="match status" value="2"/>
</dbReference>
<dbReference type="HAMAP" id="MF_01024">
    <property type="entry name" value="HisD"/>
    <property type="match status" value="1"/>
</dbReference>
<dbReference type="InterPro" id="IPR016161">
    <property type="entry name" value="Ald_DH/histidinol_DH"/>
</dbReference>
<dbReference type="InterPro" id="IPR001692">
    <property type="entry name" value="Histidinol_DH_CS"/>
</dbReference>
<dbReference type="InterPro" id="IPR022695">
    <property type="entry name" value="Histidinol_DH_monofunct"/>
</dbReference>
<dbReference type="InterPro" id="IPR012131">
    <property type="entry name" value="Hstdl_DH"/>
</dbReference>
<dbReference type="NCBIfam" id="TIGR00069">
    <property type="entry name" value="hisD"/>
    <property type="match status" value="1"/>
</dbReference>
<dbReference type="PANTHER" id="PTHR21256:SF2">
    <property type="entry name" value="HISTIDINE BIOSYNTHESIS TRIFUNCTIONAL PROTEIN"/>
    <property type="match status" value="1"/>
</dbReference>
<dbReference type="PANTHER" id="PTHR21256">
    <property type="entry name" value="HISTIDINOL DEHYDROGENASE HDH"/>
    <property type="match status" value="1"/>
</dbReference>
<dbReference type="Pfam" id="PF00815">
    <property type="entry name" value="Histidinol_dh"/>
    <property type="match status" value="1"/>
</dbReference>
<dbReference type="PIRSF" id="PIRSF000099">
    <property type="entry name" value="Histidinol_dh"/>
    <property type="match status" value="1"/>
</dbReference>
<dbReference type="PRINTS" id="PR00083">
    <property type="entry name" value="HOLDHDRGNASE"/>
</dbReference>
<dbReference type="SUPFAM" id="SSF53720">
    <property type="entry name" value="ALDH-like"/>
    <property type="match status" value="1"/>
</dbReference>
<dbReference type="PROSITE" id="PS00611">
    <property type="entry name" value="HISOL_DEHYDROGENASE"/>
    <property type="match status" value="1"/>
</dbReference>
<proteinExistence type="inferred from homology"/>
<keyword id="KW-0028">Amino-acid biosynthesis</keyword>
<keyword id="KW-0368">Histidine biosynthesis</keyword>
<keyword id="KW-0479">Metal-binding</keyword>
<keyword id="KW-0520">NAD</keyword>
<keyword id="KW-0560">Oxidoreductase</keyword>
<keyword id="KW-0862">Zinc</keyword>
<accession>P62458</accession>
<comment type="function">
    <text evidence="1">Catalyzes the sequential NAD-dependent oxidations of L-histidinol to L-histidinaldehyde and then to L-histidine.</text>
</comment>
<comment type="catalytic activity">
    <reaction evidence="1">
        <text>L-histidinol + 2 NAD(+) + H2O = L-histidine + 2 NADH + 3 H(+)</text>
        <dbReference type="Rhea" id="RHEA:20641"/>
        <dbReference type="ChEBI" id="CHEBI:15377"/>
        <dbReference type="ChEBI" id="CHEBI:15378"/>
        <dbReference type="ChEBI" id="CHEBI:57540"/>
        <dbReference type="ChEBI" id="CHEBI:57595"/>
        <dbReference type="ChEBI" id="CHEBI:57699"/>
        <dbReference type="ChEBI" id="CHEBI:57945"/>
        <dbReference type="EC" id="1.1.1.23"/>
    </reaction>
</comment>
<comment type="cofactor">
    <cofactor evidence="1">
        <name>Zn(2+)</name>
        <dbReference type="ChEBI" id="CHEBI:29105"/>
    </cofactor>
    <text evidence="1">Binds 1 zinc ion per subunit.</text>
</comment>
<comment type="pathway">
    <text evidence="1">Amino-acid biosynthesis; L-histidine biosynthesis; L-histidine from 5-phospho-alpha-D-ribose 1-diphosphate: step 9/9.</text>
</comment>
<comment type="similarity">
    <text evidence="1">Belongs to the histidinol dehydrogenase family.</text>
</comment>
<protein>
    <recommendedName>
        <fullName evidence="1">Histidinol dehydrogenase</fullName>
        <shortName evidence="1">HDH</shortName>
        <ecNumber evidence="1">1.1.1.23</ecNumber>
    </recommendedName>
</protein>
<reference key="1">
    <citation type="journal article" date="2004" name="J. Bacteriol.">
        <title>Comparative genomics of two Leptospira interrogans serovars reveals novel insights into physiology and pathogenesis.</title>
        <authorList>
            <person name="Nascimento A.L.T.O."/>
            <person name="Ko A.I."/>
            <person name="Martins E.A.L."/>
            <person name="Monteiro-Vitorello C.B."/>
            <person name="Ho P.L."/>
            <person name="Haake D.A."/>
            <person name="Verjovski-Almeida S."/>
            <person name="Hartskeerl R.A."/>
            <person name="Marques M.V."/>
            <person name="Oliveira M.C."/>
            <person name="Menck C.F.M."/>
            <person name="Leite L.C.C."/>
            <person name="Carrer H."/>
            <person name="Coutinho L.L."/>
            <person name="Degrave W.M."/>
            <person name="Dellagostin O.A."/>
            <person name="El-Dorry H."/>
            <person name="Ferro E.S."/>
            <person name="Ferro M.I.T."/>
            <person name="Furlan L.R."/>
            <person name="Gamberini M."/>
            <person name="Giglioti E.A."/>
            <person name="Goes-Neto A."/>
            <person name="Goldman G.H."/>
            <person name="Goldman M.H.S."/>
            <person name="Harakava R."/>
            <person name="Jeronimo S.M.B."/>
            <person name="Junqueira-de-Azevedo I.L.M."/>
            <person name="Kimura E.T."/>
            <person name="Kuramae E.E."/>
            <person name="Lemos E.G.M."/>
            <person name="Lemos M.V.F."/>
            <person name="Marino C.L."/>
            <person name="Nunes L.R."/>
            <person name="de Oliveira R.C."/>
            <person name="Pereira G.G."/>
            <person name="Reis M.S."/>
            <person name="Schriefer A."/>
            <person name="Siqueira W.J."/>
            <person name="Sommer P."/>
            <person name="Tsai S.M."/>
            <person name="Simpson A.J.G."/>
            <person name="Ferro J.A."/>
            <person name="Camargo L.E.A."/>
            <person name="Kitajima J.P."/>
            <person name="Setubal J.C."/>
            <person name="Van Sluys M.A."/>
        </authorList>
    </citation>
    <scope>NUCLEOTIDE SEQUENCE [LARGE SCALE GENOMIC DNA]</scope>
    <source>
        <strain>Fiocruz L1-130</strain>
    </source>
</reference>
<feature type="chain" id="PRO_0000135789" description="Histidinol dehydrogenase">
    <location>
        <begin position="1"/>
        <end position="427"/>
    </location>
</feature>
<feature type="active site" description="Proton acceptor" evidence="1">
    <location>
        <position position="325"/>
    </location>
</feature>
<feature type="active site" description="Proton acceptor" evidence="1">
    <location>
        <position position="326"/>
    </location>
</feature>
<feature type="binding site" evidence="1">
    <location>
        <position position="125"/>
    </location>
    <ligand>
        <name>NAD(+)</name>
        <dbReference type="ChEBI" id="CHEBI:57540"/>
    </ligand>
</feature>
<feature type="binding site" evidence="1">
    <location>
        <position position="186"/>
    </location>
    <ligand>
        <name>NAD(+)</name>
        <dbReference type="ChEBI" id="CHEBI:57540"/>
    </ligand>
</feature>
<feature type="binding site" evidence="1">
    <location>
        <position position="209"/>
    </location>
    <ligand>
        <name>NAD(+)</name>
        <dbReference type="ChEBI" id="CHEBI:57540"/>
    </ligand>
</feature>
<feature type="binding site" evidence="1">
    <location>
        <position position="234"/>
    </location>
    <ligand>
        <name>substrate</name>
    </ligand>
</feature>
<feature type="binding site" evidence="1">
    <location>
        <position position="256"/>
    </location>
    <ligand>
        <name>substrate</name>
    </ligand>
</feature>
<feature type="binding site" evidence="1">
    <location>
        <position position="256"/>
    </location>
    <ligand>
        <name>Zn(2+)</name>
        <dbReference type="ChEBI" id="CHEBI:29105"/>
    </ligand>
</feature>
<feature type="binding site" evidence="1">
    <location>
        <position position="259"/>
    </location>
    <ligand>
        <name>substrate</name>
    </ligand>
</feature>
<feature type="binding site" evidence="1">
    <location>
        <position position="259"/>
    </location>
    <ligand>
        <name>Zn(2+)</name>
        <dbReference type="ChEBI" id="CHEBI:29105"/>
    </ligand>
</feature>
<feature type="binding site" evidence="1">
    <location>
        <position position="326"/>
    </location>
    <ligand>
        <name>substrate</name>
    </ligand>
</feature>
<feature type="binding site" evidence="1">
    <location>
        <position position="359"/>
    </location>
    <ligand>
        <name>substrate</name>
    </ligand>
</feature>
<feature type="binding site" evidence="1">
    <location>
        <position position="359"/>
    </location>
    <ligand>
        <name>Zn(2+)</name>
        <dbReference type="ChEBI" id="CHEBI:29105"/>
    </ligand>
</feature>
<feature type="binding site" evidence="1">
    <location>
        <position position="413"/>
    </location>
    <ligand>
        <name>substrate</name>
    </ligand>
</feature>
<feature type="binding site" evidence="1">
    <location>
        <position position="419"/>
    </location>
    <ligand>
        <name>substrate</name>
    </ligand>
</feature>
<feature type="binding site" evidence="1">
    <location>
        <position position="419"/>
    </location>
    <ligand>
        <name>Zn(2+)</name>
        <dbReference type="ChEBI" id="CHEBI:29105"/>
    </ligand>
</feature>
<organism>
    <name type="scientific">Leptospira interrogans serogroup Icterohaemorrhagiae serovar copenhageni (strain Fiocruz L1-130)</name>
    <dbReference type="NCBI Taxonomy" id="267671"/>
    <lineage>
        <taxon>Bacteria</taxon>
        <taxon>Pseudomonadati</taxon>
        <taxon>Spirochaetota</taxon>
        <taxon>Spirochaetia</taxon>
        <taxon>Leptospirales</taxon>
        <taxon>Leptospiraceae</taxon>
        <taxon>Leptospira</taxon>
    </lineage>
</organism>
<gene>
    <name evidence="1" type="primary">hisD</name>
    <name type="ordered locus">LIC_11453</name>
</gene>
<evidence type="ECO:0000255" key="1">
    <source>
        <dbReference type="HAMAP-Rule" id="MF_01024"/>
    </source>
</evidence>
<sequence length="427" mass="46381">MAIQIFKVGLKDHSVLDPVLKRAREDLSSTLALVKPIVEDVKNRGDSALREYTQKFDEVIPPKSFVLEISKLNPKIDPKLKTALVKAAKNIRNFHKIQIPENKEIIIHGNKLGILHTPIESVSVYAPGGKALYPSTILMGVIPAKLAGVKNIQIVTPPRKGTLPDGLIAAAKIAGADRIVMAGGAQGIAAVSYGTESIPSSEFVVGPGNKFVTAAKVYLSGQGVIGIDSPAGPSEVLIIADDSADPMWVAADLLSQAEHGEDSVAILCTNSLSLAQKVKEEVEKALIERPKRGEMKRKSIEDHGKIFVFSNLEECFVFSNLFAPEHLEIQTKNFKKDLKKVKHAGSVFLGNYSPVAMGDYISGTNHILPTAGAARIYSSLGVSTFLKRVTWQEVSKKSIQNLYPHVKVLSEFEGLDEEHGNSVRIRR</sequence>
<name>HISX_LEPIC</name>